<keyword id="KW-0067">ATP-binding</keyword>
<keyword id="KW-0963">Cytoplasm</keyword>
<keyword id="KW-0460">Magnesium</keyword>
<keyword id="KW-0479">Metal-binding</keyword>
<keyword id="KW-0547">Nucleotide-binding</keyword>
<keyword id="KW-0554">One-carbon metabolism</keyword>
<keyword id="KW-0630">Potassium</keyword>
<keyword id="KW-0808">Transferase</keyword>
<sequence length="389" mass="42110">MSKSHLFTSESVSEGHPDKVADQISDAILDAILAQDPRGRVAAETLITTGLIVLAGEITTTAVVDYADVARQTVRRIGYNSSDMGFDWASCAVVQTLDKQSPDIAQGVDEGAGLDLDQGAGDQGLMFGFACDETDVLMPTPIYFAHRLTERQAMVRKDGRLPWLRPDAKSQVTVRYEDDRPVAIDTVVLSTQHAPDISHADLVEAVREEIIKPVLPPEMIHKDTKYLINPTGRFVIGGPVGDCGLTGRKIIVDTYGGQGSHGGGAFSGKDPSKVDRSSSYAGRYVAKNIVAAGLARRCEVQVAYAIGVSQPVSLMVDTFGTGVIDDDRIAALVQEHFDLRPKGIIQMLDLLRPIYAKTAAYGHFGREEPEFTWERTDKAAVLRDAAGLR</sequence>
<reference key="1">
    <citation type="submission" date="2008-08" db="EMBL/GenBank/DDBJ databases">
        <title>Complete sequence of Acidithiobacillus ferrooxidans ATCC 53993.</title>
        <authorList>
            <person name="Lucas S."/>
            <person name="Copeland A."/>
            <person name="Lapidus A."/>
            <person name="Glavina del Rio T."/>
            <person name="Dalin E."/>
            <person name="Tice H."/>
            <person name="Bruce D."/>
            <person name="Goodwin L."/>
            <person name="Pitluck S."/>
            <person name="Sims D."/>
            <person name="Brettin T."/>
            <person name="Detter J.C."/>
            <person name="Han C."/>
            <person name="Kuske C.R."/>
            <person name="Larimer F."/>
            <person name="Land M."/>
            <person name="Hauser L."/>
            <person name="Kyrpides N."/>
            <person name="Lykidis A."/>
            <person name="Borole A.P."/>
        </authorList>
    </citation>
    <scope>NUCLEOTIDE SEQUENCE [LARGE SCALE GENOMIC DNA]</scope>
    <source>
        <strain>ATCC 53993 / BNL-5-31</strain>
    </source>
</reference>
<feature type="chain" id="PRO_1000093017" description="S-adenosylmethionine synthase">
    <location>
        <begin position="1"/>
        <end position="389"/>
    </location>
</feature>
<feature type="region of interest" description="Flexible loop" evidence="1">
    <location>
        <begin position="100"/>
        <end position="110"/>
    </location>
</feature>
<feature type="binding site" description="in other chain" evidence="1">
    <location>
        <position position="16"/>
    </location>
    <ligand>
        <name>ATP</name>
        <dbReference type="ChEBI" id="CHEBI:30616"/>
        <note>ligand shared between two neighboring subunits</note>
    </ligand>
</feature>
<feature type="binding site" evidence="1">
    <location>
        <position position="18"/>
    </location>
    <ligand>
        <name>Mg(2+)</name>
        <dbReference type="ChEBI" id="CHEBI:18420"/>
    </ligand>
</feature>
<feature type="binding site" evidence="1">
    <location>
        <position position="44"/>
    </location>
    <ligand>
        <name>K(+)</name>
        <dbReference type="ChEBI" id="CHEBI:29103"/>
    </ligand>
</feature>
<feature type="binding site" description="in other chain" evidence="1">
    <location>
        <position position="57"/>
    </location>
    <ligand>
        <name>L-methionine</name>
        <dbReference type="ChEBI" id="CHEBI:57844"/>
        <note>ligand shared between two neighboring subunits</note>
    </ligand>
</feature>
<feature type="binding site" description="in other chain" evidence="1">
    <location>
        <position position="100"/>
    </location>
    <ligand>
        <name>L-methionine</name>
        <dbReference type="ChEBI" id="CHEBI:57844"/>
        <note>ligand shared between two neighboring subunits</note>
    </ligand>
</feature>
<feature type="binding site" description="in other chain" evidence="1">
    <location>
        <begin position="167"/>
        <end position="169"/>
    </location>
    <ligand>
        <name>ATP</name>
        <dbReference type="ChEBI" id="CHEBI:30616"/>
        <note>ligand shared between two neighboring subunits</note>
    </ligand>
</feature>
<feature type="binding site" description="in other chain" evidence="1">
    <location>
        <begin position="233"/>
        <end position="234"/>
    </location>
    <ligand>
        <name>ATP</name>
        <dbReference type="ChEBI" id="CHEBI:30616"/>
        <note>ligand shared between two neighboring subunits</note>
    </ligand>
</feature>
<feature type="binding site" evidence="1">
    <location>
        <position position="242"/>
    </location>
    <ligand>
        <name>ATP</name>
        <dbReference type="ChEBI" id="CHEBI:30616"/>
        <note>ligand shared between two neighboring subunits</note>
    </ligand>
</feature>
<feature type="binding site" evidence="1">
    <location>
        <position position="242"/>
    </location>
    <ligand>
        <name>L-methionine</name>
        <dbReference type="ChEBI" id="CHEBI:57844"/>
        <note>ligand shared between two neighboring subunits</note>
    </ligand>
</feature>
<feature type="binding site" description="in other chain" evidence="1">
    <location>
        <begin position="248"/>
        <end position="249"/>
    </location>
    <ligand>
        <name>ATP</name>
        <dbReference type="ChEBI" id="CHEBI:30616"/>
        <note>ligand shared between two neighboring subunits</note>
    </ligand>
</feature>
<feature type="binding site" evidence="1">
    <location>
        <position position="265"/>
    </location>
    <ligand>
        <name>ATP</name>
        <dbReference type="ChEBI" id="CHEBI:30616"/>
        <note>ligand shared between two neighboring subunits</note>
    </ligand>
</feature>
<feature type="binding site" evidence="1">
    <location>
        <position position="269"/>
    </location>
    <ligand>
        <name>ATP</name>
        <dbReference type="ChEBI" id="CHEBI:30616"/>
        <note>ligand shared between two neighboring subunits</note>
    </ligand>
</feature>
<feature type="binding site" description="in other chain" evidence="1">
    <location>
        <position position="273"/>
    </location>
    <ligand>
        <name>L-methionine</name>
        <dbReference type="ChEBI" id="CHEBI:57844"/>
        <note>ligand shared between two neighboring subunits</note>
    </ligand>
</feature>
<gene>
    <name evidence="1" type="primary">metK</name>
    <name type="ordered locus">Lferr_0690</name>
</gene>
<accession>B5EN11</accession>
<organism>
    <name type="scientific">Acidithiobacillus ferrooxidans (strain ATCC 53993 / BNL-5-31)</name>
    <name type="common">Leptospirillum ferrooxidans (ATCC 53993)</name>
    <dbReference type="NCBI Taxonomy" id="380394"/>
    <lineage>
        <taxon>Bacteria</taxon>
        <taxon>Pseudomonadati</taxon>
        <taxon>Pseudomonadota</taxon>
        <taxon>Acidithiobacillia</taxon>
        <taxon>Acidithiobacillales</taxon>
        <taxon>Acidithiobacillaceae</taxon>
        <taxon>Acidithiobacillus</taxon>
    </lineage>
</organism>
<name>METK_ACIF5</name>
<comment type="function">
    <text evidence="1">Catalyzes the formation of S-adenosylmethionine (AdoMet) from methionine and ATP. The overall synthetic reaction is composed of two sequential steps, AdoMet formation and the subsequent tripolyphosphate hydrolysis which occurs prior to release of AdoMet from the enzyme.</text>
</comment>
<comment type="catalytic activity">
    <reaction evidence="1">
        <text>L-methionine + ATP + H2O = S-adenosyl-L-methionine + phosphate + diphosphate</text>
        <dbReference type="Rhea" id="RHEA:21080"/>
        <dbReference type="ChEBI" id="CHEBI:15377"/>
        <dbReference type="ChEBI" id="CHEBI:30616"/>
        <dbReference type="ChEBI" id="CHEBI:33019"/>
        <dbReference type="ChEBI" id="CHEBI:43474"/>
        <dbReference type="ChEBI" id="CHEBI:57844"/>
        <dbReference type="ChEBI" id="CHEBI:59789"/>
        <dbReference type="EC" id="2.5.1.6"/>
    </reaction>
</comment>
<comment type="cofactor">
    <cofactor evidence="1">
        <name>Mg(2+)</name>
        <dbReference type="ChEBI" id="CHEBI:18420"/>
    </cofactor>
    <text evidence="1">Binds 2 divalent ions per subunit.</text>
</comment>
<comment type="cofactor">
    <cofactor evidence="1">
        <name>K(+)</name>
        <dbReference type="ChEBI" id="CHEBI:29103"/>
    </cofactor>
    <text evidence="1">Binds 1 potassium ion per subunit.</text>
</comment>
<comment type="pathway">
    <text evidence="1">Amino-acid biosynthesis; S-adenosyl-L-methionine biosynthesis; S-adenosyl-L-methionine from L-methionine: step 1/1.</text>
</comment>
<comment type="subunit">
    <text evidence="1">Homotetramer; dimer of dimers.</text>
</comment>
<comment type="subcellular location">
    <subcellularLocation>
        <location evidence="1">Cytoplasm</location>
    </subcellularLocation>
</comment>
<comment type="similarity">
    <text evidence="1">Belongs to the AdoMet synthase family.</text>
</comment>
<dbReference type="EC" id="2.5.1.6" evidence="1"/>
<dbReference type="EMBL" id="CP001132">
    <property type="protein sequence ID" value="ACH82941.1"/>
    <property type="molecule type" value="Genomic_DNA"/>
</dbReference>
<dbReference type="RefSeq" id="WP_012536187.1">
    <property type="nucleotide sequence ID" value="NC_011206.1"/>
</dbReference>
<dbReference type="SMR" id="B5EN11"/>
<dbReference type="GeneID" id="65279893"/>
<dbReference type="KEGG" id="afe:Lferr_0690"/>
<dbReference type="eggNOG" id="COG0192">
    <property type="taxonomic scope" value="Bacteria"/>
</dbReference>
<dbReference type="HOGENOM" id="CLU_041802_1_1_6"/>
<dbReference type="UniPathway" id="UPA00315">
    <property type="reaction ID" value="UER00080"/>
</dbReference>
<dbReference type="GO" id="GO:0005737">
    <property type="term" value="C:cytoplasm"/>
    <property type="evidence" value="ECO:0007669"/>
    <property type="project" value="UniProtKB-SubCell"/>
</dbReference>
<dbReference type="GO" id="GO:0005524">
    <property type="term" value="F:ATP binding"/>
    <property type="evidence" value="ECO:0007669"/>
    <property type="project" value="UniProtKB-UniRule"/>
</dbReference>
<dbReference type="GO" id="GO:0000287">
    <property type="term" value="F:magnesium ion binding"/>
    <property type="evidence" value="ECO:0007669"/>
    <property type="project" value="UniProtKB-UniRule"/>
</dbReference>
<dbReference type="GO" id="GO:0004478">
    <property type="term" value="F:methionine adenosyltransferase activity"/>
    <property type="evidence" value="ECO:0007669"/>
    <property type="project" value="UniProtKB-UniRule"/>
</dbReference>
<dbReference type="GO" id="GO:0006730">
    <property type="term" value="P:one-carbon metabolic process"/>
    <property type="evidence" value="ECO:0007669"/>
    <property type="project" value="UniProtKB-KW"/>
</dbReference>
<dbReference type="GO" id="GO:0006556">
    <property type="term" value="P:S-adenosylmethionine biosynthetic process"/>
    <property type="evidence" value="ECO:0007669"/>
    <property type="project" value="UniProtKB-UniRule"/>
</dbReference>
<dbReference type="CDD" id="cd18079">
    <property type="entry name" value="S-AdoMet_synt"/>
    <property type="match status" value="1"/>
</dbReference>
<dbReference type="FunFam" id="3.30.300.10:FF:000003">
    <property type="entry name" value="S-adenosylmethionine synthase"/>
    <property type="match status" value="1"/>
</dbReference>
<dbReference type="FunFam" id="3.30.300.10:FF:000004">
    <property type="entry name" value="S-adenosylmethionine synthase"/>
    <property type="match status" value="1"/>
</dbReference>
<dbReference type="Gene3D" id="3.30.300.10">
    <property type="match status" value="3"/>
</dbReference>
<dbReference type="HAMAP" id="MF_00086">
    <property type="entry name" value="S_AdoMet_synth1"/>
    <property type="match status" value="1"/>
</dbReference>
<dbReference type="InterPro" id="IPR022631">
    <property type="entry name" value="ADOMET_SYNTHASE_CS"/>
</dbReference>
<dbReference type="InterPro" id="IPR022630">
    <property type="entry name" value="S-AdoMet_synt_C"/>
</dbReference>
<dbReference type="InterPro" id="IPR022629">
    <property type="entry name" value="S-AdoMet_synt_central"/>
</dbReference>
<dbReference type="InterPro" id="IPR022628">
    <property type="entry name" value="S-AdoMet_synt_N"/>
</dbReference>
<dbReference type="InterPro" id="IPR002133">
    <property type="entry name" value="S-AdoMet_synthetase"/>
</dbReference>
<dbReference type="InterPro" id="IPR022636">
    <property type="entry name" value="S-AdoMet_synthetase_sfam"/>
</dbReference>
<dbReference type="NCBIfam" id="TIGR01034">
    <property type="entry name" value="metK"/>
    <property type="match status" value="1"/>
</dbReference>
<dbReference type="PANTHER" id="PTHR11964">
    <property type="entry name" value="S-ADENOSYLMETHIONINE SYNTHETASE"/>
    <property type="match status" value="1"/>
</dbReference>
<dbReference type="Pfam" id="PF02773">
    <property type="entry name" value="S-AdoMet_synt_C"/>
    <property type="match status" value="1"/>
</dbReference>
<dbReference type="Pfam" id="PF02772">
    <property type="entry name" value="S-AdoMet_synt_M"/>
    <property type="match status" value="1"/>
</dbReference>
<dbReference type="Pfam" id="PF00438">
    <property type="entry name" value="S-AdoMet_synt_N"/>
    <property type="match status" value="1"/>
</dbReference>
<dbReference type="PIRSF" id="PIRSF000497">
    <property type="entry name" value="MAT"/>
    <property type="match status" value="1"/>
</dbReference>
<dbReference type="SUPFAM" id="SSF55973">
    <property type="entry name" value="S-adenosylmethionine synthetase"/>
    <property type="match status" value="3"/>
</dbReference>
<dbReference type="PROSITE" id="PS00376">
    <property type="entry name" value="ADOMET_SYNTHASE_1"/>
    <property type="match status" value="1"/>
</dbReference>
<dbReference type="PROSITE" id="PS00377">
    <property type="entry name" value="ADOMET_SYNTHASE_2"/>
    <property type="match status" value="1"/>
</dbReference>
<evidence type="ECO:0000255" key="1">
    <source>
        <dbReference type="HAMAP-Rule" id="MF_00086"/>
    </source>
</evidence>
<protein>
    <recommendedName>
        <fullName evidence="1">S-adenosylmethionine synthase</fullName>
        <shortName evidence="1">AdoMet synthase</shortName>
        <ecNumber evidence="1">2.5.1.6</ecNumber>
    </recommendedName>
    <alternativeName>
        <fullName evidence="1">MAT</fullName>
    </alternativeName>
    <alternativeName>
        <fullName evidence="1">Methionine adenosyltransferase</fullName>
    </alternativeName>
</protein>
<proteinExistence type="inferred from homology"/>